<comment type="function">
    <text evidence="3 4 5 6 7">Sterol 14alpha-demethylase that plays a critical role in the cholesterol biosynthesis pathway, being cholesterol the major sterol component in mammalian membranes as well as a precursor for bile acid and steroid hormone synthesis (PubMed:10544287, PubMed:7665087). Cytochrome P450 monooxygenase that catalyzes the three-step oxidative removal of the 14alpha-methyl group (C-32) of sterols such as lanosterol (lanosta-8,24-dien-3beta-ol) and 24,25-dihydrolanosterol (DHL) in the form of formate, and converts the sterols to 4,4-dimethyl-5alpha-cholesta-8,14,24-trien-3beta-ol and 4,4-dimethyl-8,14-cholestadien-3beta-ol, respectively, which are intermediates of cholesterol biosynthesis (PubMed:10544287, PubMed:11328599, PubMed:1872829, PubMed:3782148, PubMed:7665087). Can also demethylate substrates not intrinsic to mammals, such as eburicol (24-methylene-24,25-dihydrolanosterol), but at a lower rate than DHL (PubMed:1872829).</text>
</comment>
<comment type="catalytic activity">
    <reaction evidence="3 4 5 6 7">
        <text>a 14alpha-methyl steroid + 3 reduced [NADPH--hemoprotein reductase] + 3 O2 = a Delta(14) steroid + formate + 3 oxidized [NADPH--hemoprotein reductase] + 4 H2O + 4 H(+)</text>
        <dbReference type="Rhea" id="RHEA:54028"/>
        <dbReference type="Rhea" id="RHEA-COMP:11964"/>
        <dbReference type="Rhea" id="RHEA-COMP:11965"/>
        <dbReference type="ChEBI" id="CHEBI:15377"/>
        <dbReference type="ChEBI" id="CHEBI:15378"/>
        <dbReference type="ChEBI" id="CHEBI:15379"/>
        <dbReference type="ChEBI" id="CHEBI:15740"/>
        <dbReference type="ChEBI" id="CHEBI:57618"/>
        <dbReference type="ChEBI" id="CHEBI:58210"/>
        <dbReference type="ChEBI" id="CHEBI:138029"/>
        <dbReference type="ChEBI" id="CHEBI:138031"/>
        <dbReference type="EC" id="1.14.14.154"/>
    </reaction>
    <physiologicalReaction direction="left-to-right" evidence="5 15 16 17">
        <dbReference type="Rhea" id="RHEA:54029"/>
    </physiologicalReaction>
</comment>
<comment type="catalytic activity">
    <reaction evidence="3 4 5 17 18">
        <text>lanosterol + 3 reduced [NADPH--hemoprotein reductase] + 3 O2 = 4,4-dimethyl-5alpha-cholesta-8,14,24-trien-3beta-ol + formate + 3 oxidized [NADPH--hemoprotein reductase] + 4 H2O + 4 H(+)</text>
        <dbReference type="Rhea" id="RHEA:25286"/>
        <dbReference type="Rhea" id="RHEA-COMP:11964"/>
        <dbReference type="Rhea" id="RHEA-COMP:11965"/>
        <dbReference type="ChEBI" id="CHEBI:15377"/>
        <dbReference type="ChEBI" id="CHEBI:15378"/>
        <dbReference type="ChEBI" id="CHEBI:15379"/>
        <dbReference type="ChEBI" id="CHEBI:15740"/>
        <dbReference type="ChEBI" id="CHEBI:16521"/>
        <dbReference type="ChEBI" id="CHEBI:17813"/>
        <dbReference type="ChEBI" id="CHEBI:57618"/>
        <dbReference type="ChEBI" id="CHEBI:58210"/>
        <dbReference type="EC" id="1.14.14.154"/>
    </reaction>
    <physiologicalReaction direction="left-to-right" evidence="5 15 16 17 18">
        <dbReference type="Rhea" id="RHEA:25287"/>
    </physiologicalReaction>
</comment>
<comment type="catalytic activity">
    <reaction evidence="3 5 6 7">
        <text>24,25-dihydrolanosterol + 3 reduced [NADPH--hemoprotein reductase] + 3 O2 = 4,4-dimethyl-8,14-cholestadien-3beta-ol + formate + 3 oxidized [NADPH--hemoprotein reductase] + 4 H2O + 4 H(+)</text>
        <dbReference type="Rhea" id="RHEA:45960"/>
        <dbReference type="Rhea" id="RHEA-COMP:11964"/>
        <dbReference type="Rhea" id="RHEA-COMP:11965"/>
        <dbReference type="ChEBI" id="CHEBI:15377"/>
        <dbReference type="ChEBI" id="CHEBI:15378"/>
        <dbReference type="ChEBI" id="CHEBI:15379"/>
        <dbReference type="ChEBI" id="CHEBI:15740"/>
        <dbReference type="ChEBI" id="CHEBI:28113"/>
        <dbReference type="ChEBI" id="CHEBI:57618"/>
        <dbReference type="ChEBI" id="CHEBI:58210"/>
        <dbReference type="ChEBI" id="CHEBI:78904"/>
    </reaction>
    <physiologicalReaction direction="left-to-right" evidence="5 15 17">
        <dbReference type="Rhea" id="RHEA:45961"/>
    </physiologicalReaction>
</comment>
<comment type="catalytic activity">
    <reaction evidence="6">
        <text>a 14alpha-methyl steroid + reduced [NADPH--hemoprotein reductase] + O2 = a 14alpha-hydroxymethyl steroid + oxidized [NADPH--hemoprotein reductase] + H2O + H(+)</text>
        <dbReference type="Rhea" id="RHEA:68060"/>
        <dbReference type="Rhea" id="RHEA-COMP:11964"/>
        <dbReference type="Rhea" id="RHEA-COMP:11965"/>
        <dbReference type="ChEBI" id="CHEBI:15377"/>
        <dbReference type="ChEBI" id="CHEBI:15378"/>
        <dbReference type="ChEBI" id="CHEBI:15379"/>
        <dbReference type="ChEBI" id="CHEBI:57618"/>
        <dbReference type="ChEBI" id="CHEBI:58210"/>
        <dbReference type="ChEBI" id="CHEBI:138029"/>
        <dbReference type="ChEBI" id="CHEBI:176901"/>
    </reaction>
    <physiologicalReaction direction="left-to-right" evidence="17">
        <dbReference type="Rhea" id="RHEA:68061"/>
    </physiologicalReaction>
</comment>
<comment type="catalytic activity">
    <reaction evidence="6">
        <text>a 14alpha-hydroxymethyl steroid + reduced [NADPH--hemoprotein reductase] + O2 = a 14alpha-formyl steroid + oxidized [NADPH--hemoprotein reductase] + 2 H2O + H(+)</text>
        <dbReference type="Rhea" id="RHEA:68064"/>
        <dbReference type="Rhea" id="RHEA-COMP:11964"/>
        <dbReference type="Rhea" id="RHEA-COMP:11965"/>
        <dbReference type="ChEBI" id="CHEBI:15377"/>
        <dbReference type="ChEBI" id="CHEBI:15378"/>
        <dbReference type="ChEBI" id="CHEBI:15379"/>
        <dbReference type="ChEBI" id="CHEBI:57618"/>
        <dbReference type="ChEBI" id="CHEBI:58210"/>
        <dbReference type="ChEBI" id="CHEBI:176901"/>
        <dbReference type="ChEBI" id="CHEBI:176902"/>
    </reaction>
    <physiologicalReaction direction="left-to-right" evidence="17">
        <dbReference type="Rhea" id="RHEA:68065"/>
    </physiologicalReaction>
</comment>
<comment type="catalytic activity">
    <reaction evidence="6">
        <text>a 14alpha-formyl steroid + reduced [NADPH--hemoprotein reductase] + O2 = a Delta(14) steroid + formate + oxidized [NADPH--hemoprotein reductase] + H2O + 2 H(+)</text>
        <dbReference type="Rhea" id="RHEA:68068"/>
        <dbReference type="Rhea" id="RHEA-COMP:11964"/>
        <dbReference type="Rhea" id="RHEA-COMP:11965"/>
        <dbReference type="ChEBI" id="CHEBI:15377"/>
        <dbReference type="ChEBI" id="CHEBI:15378"/>
        <dbReference type="ChEBI" id="CHEBI:15379"/>
        <dbReference type="ChEBI" id="CHEBI:15740"/>
        <dbReference type="ChEBI" id="CHEBI:57618"/>
        <dbReference type="ChEBI" id="CHEBI:58210"/>
        <dbReference type="ChEBI" id="CHEBI:138031"/>
        <dbReference type="ChEBI" id="CHEBI:176902"/>
    </reaction>
    <physiologicalReaction direction="left-to-right" evidence="17">
        <dbReference type="Rhea" id="RHEA:68069"/>
    </physiologicalReaction>
</comment>
<comment type="catalytic activity">
    <reaction evidence="17">
        <text>lanosterol + reduced [NADPH--hemoprotein reductase] + O2 = 32-hydroxylanosterol + oxidized [NADPH--hemoprotein reductase] + H2O + H(+)</text>
        <dbReference type="Rhea" id="RHEA:75103"/>
        <dbReference type="Rhea" id="RHEA-COMP:11964"/>
        <dbReference type="Rhea" id="RHEA-COMP:11965"/>
        <dbReference type="ChEBI" id="CHEBI:15377"/>
        <dbReference type="ChEBI" id="CHEBI:15378"/>
        <dbReference type="ChEBI" id="CHEBI:15379"/>
        <dbReference type="ChEBI" id="CHEBI:16521"/>
        <dbReference type="ChEBI" id="CHEBI:57618"/>
        <dbReference type="ChEBI" id="CHEBI:58210"/>
        <dbReference type="ChEBI" id="CHEBI:166806"/>
    </reaction>
    <physiologicalReaction direction="left-to-right" evidence="17">
        <dbReference type="Rhea" id="RHEA:75104"/>
    </physiologicalReaction>
</comment>
<comment type="catalytic activity">
    <reaction evidence="17">
        <text>32-hydroxylanosterol + reduced [NADPH--hemoprotein reductase] + O2 = 32-oxolanosterol + oxidized [NADPH--hemoprotein reductase] + 2 H2O + H(+)</text>
        <dbReference type="Rhea" id="RHEA:75107"/>
        <dbReference type="Rhea" id="RHEA-COMP:11964"/>
        <dbReference type="Rhea" id="RHEA-COMP:11965"/>
        <dbReference type="ChEBI" id="CHEBI:15377"/>
        <dbReference type="ChEBI" id="CHEBI:15378"/>
        <dbReference type="ChEBI" id="CHEBI:15379"/>
        <dbReference type="ChEBI" id="CHEBI:57618"/>
        <dbReference type="ChEBI" id="CHEBI:58210"/>
        <dbReference type="ChEBI" id="CHEBI:166681"/>
        <dbReference type="ChEBI" id="CHEBI:166806"/>
    </reaction>
    <physiologicalReaction direction="left-to-right" evidence="17">
        <dbReference type="Rhea" id="RHEA:75108"/>
    </physiologicalReaction>
</comment>
<comment type="catalytic activity">
    <reaction evidence="17">
        <text>32-oxolanosterol + reduced [NADPH--hemoprotein reductase] + O2 = 4,4-dimethyl-5alpha-cholesta-8,14,24-trien-3beta-ol + formate + oxidized [NADPH--hemoprotein reductase] + H2O + 2 H(+)</text>
        <dbReference type="Rhea" id="RHEA:75111"/>
        <dbReference type="Rhea" id="RHEA-COMP:11964"/>
        <dbReference type="Rhea" id="RHEA-COMP:11965"/>
        <dbReference type="ChEBI" id="CHEBI:15377"/>
        <dbReference type="ChEBI" id="CHEBI:15378"/>
        <dbReference type="ChEBI" id="CHEBI:15379"/>
        <dbReference type="ChEBI" id="CHEBI:15740"/>
        <dbReference type="ChEBI" id="CHEBI:17813"/>
        <dbReference type="ChEBI" id="CHEBI:57618"/>
        <dbReference type="ChEBI" id="CHEBI:58210"/>
        <dbReference type="ChEBI" id="CHEBI:166681"/>
    </reaction>
    <physiologicalReaction direction="left-to-right" evidence="17">
        <dbReference type="Rhea" id="RHEA:75112"/>
    </physiologicalReaction>
</comment>
<comment type="catalytic activity">
    <reaction evidence="6">
        <text>24,25-dihydrolanosterol + reduced [NADPH--hemoprotein reductase] + O2 = 32-hydroxy-24,25-dihydrolanosterol + oxidized [NADPH--hemoprotein reductase] + H2O + H(+)</text>
        <dbReference type="Rhea" id="RHEA:75079"/>
        <dbReference type="Rhea" id="RHEA-COMP:11964"/>
        <dbReference type="Rhea" id="RHEA-COMP:11965"/>
        <dbReference type="ChEBI" id="CHEBI:15377"/>
        <dbReference type="ChEBI" id="CHEBI:15378"/>
        <dbReference type="ChEBI" id="CHEBI:15379"/>
        <dbReference type="ChEBI" id="CHEBI:28113"/>
        <dbReference type="ChEBI" id="CHEBI:57618"/>
        <dbReference type="ChEBI" id="CHEBI:58210"/>
        <dbReference type="ChEBI" id="CHEBI:87057"/>
    </reaction>
    <physiologicalReaction direction="left-to-right" evidence="17">
        <dbReference type="Rhea" id="RHEA:75080"/>
    </physiologicalReaction>
</comment>
<comment type="catalytic activity">
    <reaction evidence="6">
        <text>32-hydroxy-24,25-dihydrolanosterol + reduced [NADPH--hemoprotein reductase] + O2 = 32-oxo-24,25-dihydrolanosterol + oxidized [NADPH--hemoprotein reductase] + 2 H2O + H(+)</text>
        <dbReference type="Rhea" id="RHEA:75087"/>
        <dbReference type="Rhea" id="RHEA-COMP:11964"/>
        <dbReference type="Rhea" id="RHEA-COMP:11965"/>
        <dbReference type="ChEBI" id="CHEBI:15377"/>
        <dbReference type="ChEBI" id="CHEBI:15378"/>
        <dbReference type="ChEBI" id="CHEBI:15379"/>
        <dbReference type="ChEBI" id="CHEBI:57618"/>
        <dbReference type="ChEBI" id="CHEBI:58210"/>
        <dbReference type="ChEBI" id="CHEBI:87057"/>
        <dbReference type="ChEBI" id="CHEBI:87060"/>
    </reaction>
    <physiologicalReaction direction="left-to-right" evidence="17">
        <dbReference type="Rhea" id="RHEA:75088"/>
    </physiologicalReaction>
</comment>
<comment type="catalytic activity">
    <reaction evidence="6">
        <text>32-oxo-24,25-dihydrolanosterol + reduced [NADPH--hemoprotein reductase] + O2 = 4,4-dimethyl-8,14-cholestadien-3beta-ol + formate + oxidized [NADPH--hemoprotein reductase] + H2O + 2 H(+)</text>
        <dbReference type="Rhea" id="RHEA:75083"/>
        <dbReference type="Rhea" id="RHEA-COMP:11964"/>
        <dbReference type="Rhea" id="RHEA-COMP:11965"/>
        <dbReference type="ChEBI" id="CHEBI:15377"/>
        <dbReference type="ChEBI" id="CHEBI:15378"/>
        <dbReference type="ChEBI" id="CHEBI:15379"/>
        <dbReference type="ChEBI" id="CHEBI:15740"/>
        <dbReference type="ChEBI" id="CHEBI:57618"/>
        <dbReference type="ChEBI" id="CHEBI:58210"/>
        <dbReference type="ChEBI" id="CHEBI:78904"/>
        <dbReference type="ChEBI" id="CHEBI:87060"/>
    </reaction>
    <physiologicalReaction direction="left-to-right" evidence="17">
        <dbReference type="Rhea" id="RHEA:75084"/>
    </physiologicalReaction>
</comment>
<comment type="cofactor">
    <cofactor evidence="1">
        <name>heme</name>
        <dbReference type="ChEBI" id="CHEBI:30413"/>
    </cofactor>
</comment>
<comment type="activity regulation">
    <text evidence="3 7">Inhibited by azalanstat (PubMed:7665087). Inhibited by azole antifungal agents ketoconazole, itraconazole and fluconazole (PubMed:10544287).</text>
</comment>
<comment type="biophysicochemical properties">
    <kinetics>
        <KM evidence="6">165 uM for lanosterol</KM>
        <KM evidence="3">10.5 uM for lanosterol</KM>
        <KM evidence="6">312 uM for 24,25-dihydrolanosterol</KM>
        <KM evidence="3">20 uM for 24,25-dihydrolanosterol</KM>
        <Vmax evidence="6">3390.0 pmol/min/mg enzyme toward lanosterol</Vmax>
        <Vmax evidence="3">13.9 nmol/min/nmol enzyme toward lanosterol</Vmax>
        <Vmax evidence="6">645.0 pmol/min/mg enzyme toward 24,25-dihydrolanosterol</Vmax>
        <Vmax evidence="3">20.0 nmol/min/nmol enzyme toward 24,25-dihydrolanosterol</Vmax>
    </kinetics>
</comment>
<comment type="pathway">
    <text evidence="18">Steroid biosynthesis; zymosterol biosynthesis; zymosterol from lanosterol: step 1/6.</text>
</comment>
<comment type="subcellular location">
    <subcellularLocation>
        <location evidence="19">Endoplasmic reticulum membrane</location>
        <topology evidence="2">Single-pass membrane protein</topology>
    </subcellularLocation>
    <subcellularLocation>
        <location evidence="8">Microsome membrane</location>
        <topology evidence="2">Single-pass membrane protein</topology>
    </subcellularLocation>
</comment>
<comment type="PTM">
    <text evidence="1">Ubiquitinated by MARCHF6, leading to proteasomal degradation.</text>
</comment>
<comment type="similarity">
    <text evidence="14">Belongs to the cytochrome P450 family.</text>
</comment>
<comment type="sequence caution" evidence="14">
    <conflict type="frameshift">
        <sequence resource="EMBL-CDS" id="AAA87074"/>
    </conflict>
</comment>
<reference key="1">
    <citation type="journal article" date="1994" name="Biochem. Biophys. Res. Commun.">
        <title>Occurrence of a P450 showing high homology to yeast lanosterol 14-demethylase (P450(14DM)) in the rat liver.</title>
        <authorList>
            <person name="Aoyama Y."/>
            <person name="Funae Y."/>
            <person name="Noshiro M."/>
            <person name="Horiuchi T."/>
            <person name="Yoshida Y."/>
        </authorList>
    </citation>
    <scope>NUCLEOTIDE SEQUENCE [MRNA]</scope>
    <source>
        <tissue>Liver</tissue>
    </source>
</reference>
<reference key="2">
    <citation type="journal article" date="1997" name="J. Biochem.">
        <title>Structural and evolutionary studies on sterol 14-demethylase P450 (CYP51), the most conserved P450 monooxygenase: I. Structural analyses of the gene and multiple sizes of mRNA.</title>
        <authorList>
            <person name="Noshiro M."/>
            <person name="Aoyama Y."/>
            <person name="Kawamoto T."/>
            <person name="Gotoh O."/>
            <person name="Horiuchi T."/>
            <person name="Yoshida Y."/>
        </authorList>
    </citation>
    <scope>NUCLEOTIDE SEQUENCE [GENOMIC DNA]</scope>
    <source>
        <strain>Wistar</strain>
    </source>
</reference>
<reference key="3">
    <citation type="journal article" date="2004" name="Genome Res.">
        <title>The status, quality, and expansion of the NIH full-length cDNA project: the Mammalian Gene Collection (MGC).</title>
        <authorList>
            <consortium name="The MGC Project Team"/>
        </authorList>
    </citation>
    <scope>NUCLEOTIDE SEQUENCE [LARGE SCALE MRNA]</scope>
    <source>
        <tissue>Kidney</tissue>
    </source>
</reference>
<reference key="4">
    <citation type="journal article" date="1995" name="Gene">
        <title>Cloning and functional expression of the cDNA encoding rat lanosterol 14-alpha demethylase.</title>
        <authorList>
            <person name="Sloane D.L."/>
            <person name="So O.Y."/>
            <person name="Leung R."/>
            <person name="Scarafia L.E."/>
            <person name="Saldou N."/>
            <person name="Jarnagin K."/>
            <person name="Swinney D.C."/>
        </authorList>
    </citation>
    <scope>NUCLEOTIDE SEQUENCE [MRNA]</scope>
    <scope>PROTEIN SEQUENCE OF 60-78; 223-231; 271-285; 386-405; 437-446 AND 450-461</scope>
    <scope>FUNCTION</scope>
    <scope>CATALYTIC ACTIVITY</scope>
    <scope>ACTIVITY REGULATION</scope>
    <source>
        <tissue>Liver</tissue>
    </source>
</reference>
<reference key="5">
    <citation type="journal article" date="1986" name="J. Biol. Chem.">
        <title>Mechanistic studies of lanosterol C-32 demethylation. Conditions which promote oxysterol intermediate accumulation during the demethylation process.</title>
        <authorList>
            <person name="Trzaskos J.M."/>
            <person name="Fischer R.T."/>
            <person name="Favata M.F."/>
        </authorList>
    </citation>
    <scope>FUNCTION</scope>
    <scope>CATALYTIC ACTIVITY</scope>
    <scope>BIOPHYSICOCHEMICAL PROPERTIES</scope>
</reference>
<reference key="6">
    <citation type="journal article" date="1991" name="Biochem. Biophys. Res. Commun.">
        <title>Different substrate specificities of lanosterol 14a-demethylase (P-45014DM) of Saccharomyces cerevisiae and rat liver for 24-methylene-24,25-dihydrolanosterol and 24,25-dihydrolanosterol.</title>
        <authorList>
            <person name="Aoyama Y."/>
            <person name="Yoshida Y."/>
        </authorList>
    </citation>
    <scope>FUNCTION</scope>
    <scope>CATALYTIC ACTIVITY</scope>
</reference>
<reference key="7">
    <citation type="journal article" date="1996" name="J. Biochem.">
        <title>Sterol 14-demethylase P450 (P45014DM*) is one of the most ancient and conserved P450 species.</title>
        <authorList>
            <person name="Aoyama Y."/>
            <person name="Noshiro M."/>
            <person name="Gotoh O."/>
            <person name="Imaoka S."/>
            <person name="Funae Y."/>
            <person name="Kurosawa N."/>
            <person name="Horiuchi T."/>
            <person name="Yoshida Y."/>
        </authorList>
    </citation>
    <scope>PROTEIN SEQUENCE OF 52-81; 305-319; 324-334; 467-482 AND 488-499</scope>
    <scope>SUBCELLULAR LOCATION</scope>
    <source>
        <tissue>Liver</tissue>
    </source>
</reference>
<reference key="8">
    <citation type="journal article" date="1999" name="J. Biochem.">
        <title>Purification and characterization of rat sterol 14-demethylase P450 (CYP51) expressed in Escherichia coli.</title>
        <authorList>
            <person name="Nitahara Y."/>
            <person name="Aoyama Y."/>
            <person name="Horiuchi T."/>
            <person name="Noshiro M."/>
            <person name="Yoshida Y."/>
        </authorList>
    </citation>
    <scope>FUNCTION</scope>
    <scope>CATALYTIC ACTIVITY</scope>
    <scope>BIOPHYSICOCHEMICAL PROPERTIES</scope>
    <scope>ACTIVITY REGULATION</scope>
</reference>
<reference key="9">
    <citation type="journal article" date="2001" name="J. Biochem.">
        <title>The amino acid residues affecting the activity and azole susceptibility of rat CYP51 (sterol 14-demethylase P450).</title>
        <authorList>
            <person name="Nitahara Y."/>
            <person name="Kishimoto K."/>
            <person name="Yabusaki Y."/>
            <person name="Gotoh O."/>
            <person name="Yoshida Y."/>
            <person name="Horiuchi T."/>
            <person name="Aoyama Y."/>
        </authorList>
    </citation>
    <scope>FUNCTION</scope>
    <scope>CATALYTIC ACTIVITY</scope>
    <scope>MUTAGENESIS OF VAL-130; THR-136; PHE-139; ALA-144; TYR-227; ASP-231; HIS-314; THR-315 AND SER-316</scope>
</reference>
<feature type="chain" id="PRO_0000052001" description="Lanosterol 14-alpha demethylase">
    <location>
        <begin position="1"/>
        <end position="503"/>
    </location>
</feature>
<feature type="transmembrane region" description="Helical" evidence="2">
    <location>
        <begin position="24"/>
        <end position="44"/>
    </location>
</feature>
<feature type="binding site" description="axial binding residue" evidence="1">
    <location>
        <position position="449"/>
    </location>
    <ligand>
        <name>heme</name>
        <dbReference type="ChEBI" id="CHEBI:30413"/>
    </ligand>
    <ligandPart>
        <name>Fe</name>
        <dbReference type="ChEBI" id="CHEBI:18248"/>
    </ligandPart>
</feature>
<feature type="mutagenesis site" description="Decreases lanosterol 14-alpha demethylase activity." evidence="4">
    <original>V</original>
    <variation>A</variation>
    <location>
        <position position="130"/>
    </location>
</feature>
<feature type="mutagenesis site" description="Decreases lanosterol 14-alpha demethylase activity." evidence="4">
    <original>T</original>
    <variation>A</variation>
    <variation>V</variation>
    <location>
        <position position="136"/>
    </location>
</feature>
<feature type="mutagenesis site" description="Impairs lanosterol 14-alpha demethylase activity." evidence="4">
    <original>F</original>
    <variation>A</variation>
    <location>
        <position position="139"/>
    </location>
</feature>
<feature type="mutagenesis site" description="Decreases lanosterol 14-alpha demethylase activity. Increases the susceptibility to ketoconazole." evidence="4">
    <original>A</original>
    <variation>I</variation>
    <variation>V</variation>
    <location>
        <position position="144"/>
    </location>
</feature>
<feature type="mutagenesis site" description="Significantly decreases lanosterol 14-alpha demethylase activity. Increases the susceptibility to ketoconazole." evidence="4">
    <original>Y</original>
    <variation>A</variation>
    <location>
        <position position="227"/>
    </location>
</feature>
<feature type="mutagenesis site" description="Significantly decreases lanosterol 14-alpha demethylase activity." evidence="4">
    <original>D</original>
    <variation>A</variation>
    <variation>E</variation>
    <location>
        <position position="231"/>
    </location>
</feature>
<feature type="mutagenesis site" description="Significantly decreases lanosterol 14-alpha demethylase activity. Increases the susceptibility to ketoconazole." evidence="4">
    <original>H</original>
    <variation>F</variation>
    <variation>A</variation>
    <variation>K</variation>
    <variation>D</variation>
    <location>
        <position position="314"/>
    </location>
</feature>
<feature type="mutagenesis site" description="Impairs lanosterol 14-alpha demethylase activity. Increases the susceptibility to ketoconazole." evidence="4">
    <original>T</original>
    <variation>A</variation>
    <variation>V</variation>
    <variation>K</variation>
    <variation>N</variation>
    <location>
        <position position="315"/>
    </location>
</feature>
<feature type="mutagenesis site" description="Significantly decreases lanosterol 14-alpha demethylase activity." evidence="4">
    <original>S</original>
    <variation>T</variation>
    <variation>V</variation>
    <variation>L</variation>
    <location>
        <position position="316"/>
    </location>
</feature>
<feature type="sequence conflict" description="In Ref. 4; AAA87074." evidence="14" ref="4">
    <original>E</original>
    <variation>K</variation>
    <location>
        <position position="181"/>
    </location>
</feature>
<organism>
    <name type="scientific">Rattus norvegicus</name>
    <name type="common">Rat</name>
    <dbReference type="NCBI Taxonomy" id="10116"/>
    <lineage>
        <taxon>Eukaryota</taxon>
        <taxon>Metazoa</taxon>
        <taxon>Chordata</taxon>
        <taxon>Craniata</taxon>
        <taxon>Vertebrata</taxon>
        <taxon>Euteleostomi</taxon>
        <taxon>Mammalia</taxon>
        <taxon>Eutheria</taxon>
        <taxon>Euarchontoglires</taxon>
        <taxon>Glires</taxon>
        <taxon>Rodentia</taxon>
        <taxon>Myomorpha</taxon>
        <taxon>Muroidea</taxon>
        <taxon>Muridae</taxon>
        <taxon>Murinae</taxon>
        <taxon>Rattus</taxon>
    </lineage>
</organism>
<dbReference type="EC" id="1.14.14.154" evidence="3 4 5 6 7"/>
<dbReference type="EMBL" id="D55681">
    <property type="protein sequence ID" value="BAA09529.1"/>
    <property type="molecule type" value="mRNA"/>
</dbReference>
<dbReference type="EMBL" id="AB004096">
    <property type="protein sequence ID" value="BAA20354.1"/>
    <property type="molecule type" value="Genomic_DNA"/>
</dbReference>
<dbReference type="EMBL" id="BC087033">
    <property type="protein sequence ID" value="AAH87033.1"/>
    <property type="molecule type" value="mRNA"/>
</dbReference>
<dbReference type="EMBL" id="U17697">
    <property type="protein sequence ID" value="AAA87074.1"/>
    <property type="status" value="ALT_FRAME"/>
    <property type="molecule type" value="mRNA"/>
</dbReference>
<dbReference type="PIR" id="JC4240">
    <property type="entry name" value="JC4240"/>
</dbReference>
<dbReference type="PIR" id="JC4758">
    <property type="entry name" value="JC4758"/>
</dbReference>
<dbReference type="RefSeq" id="NP_037073.1">
    <property type="nucleotide sequence ID" value="NM_012941.2"/>
</dbReference>
<dbReference type="SMR" id="Q64654"/>
<dbReference type="BioGRID" id="247462">
    <property type="interactions" value="1"/>
</dbReference>
<dbReference type="FunCoup" id="Q64654">
    <property type="interactions" value="764"/>
</dbReference>
<dbReference type="STRING" id="10116.ENSRNOP00000009985"/>
<dbReference type="BindingDB" id="Q64654"/>
<dbReference type="ChEMBL" id="CHEMBL4981"/>
<dbReference type="DrugCentral" id="Q64654"/>
<dbReference type="SwissLipids" id="SLP:000001302"/>
<dbReference type="PhosphoSitePlus" id="Q64654"/>
<dbReference type="jPOST" id="Q64654"/>
<dbReference type="PaxDb" id="10116-ENSRNOP00000009985"/>
<dbReference type="Ensembl" id="ENSRNOT00000009985.6">
    <property type="protein sequence ID" value="ENSRNOP00000009985.3"/>
    <property type="gene ID" value="ENSRNOG00000007234.6"/>
</dbReference>
<dbReference type="GeneID" id="25427"/>
<dbReference type="KEGG" id="rno:25427"/>
<dbReference type="UCSC" id="RGD:2481">
    <property type="organism name" value="rat"/>
</dbReference>
<dbReference type="AGR" id="RGD:2481"/>
<dbReference type="CTD" id="13121"/>
<dbReference type="RGD" id="2481">
    <property type="gene designation" value="Cyp51"/>
</dbReference>
<dbReference type="eggNOG" id="KOG0684">
    <property type="taxonomic scope" value="Eukaryota"/>
</dbReference>
<dbReference type="GeneTree" id="ENSGT00930000151026"/>
<dbReference type="HOGENOM" id="CLU_001570_15_0_1"/>
<dbReference type="InParanoid" id="Q64654"/>
<dbReference type="OMA" id="HWFPFVG"/>
<dbReference type="OrthoDB" id="1055148at2759"/>
<dbReference type="PhylomeDB" id="Q64654"/>
<dbReference type="TreeFam" id="TF105091"/>
<dbReference type="BRENDA" id="1.14.14.154">
    <property type="organism ID" value="5301"/>
</dbReference>
<dbReference type="Reactome" id="R-RNO-191273">
    <property type="pathway name" value="Cholesterol biosynthesis"/>
</dbReference>
<dbReference type="Reactome" id="R-RNO-211976">
    <property type="pathway name" value="Endogenous sterols"/>
</dbReference>
<dbReference type="SABIO-RK" id="Q64654"/>
<dbReference type="UniPathway" id="UPA00770">
    <property type="reaction ID" value="UER00754"/>
</dbReference>
<dbReference type="PRO" id="PR:Q64654"/>
<dbReference type="Proteomes" id="UP000002494">
    <property type="component" value="Chromosome 4"/>
</dbReference>
<dbReference type="Bgee" id="ENSRNOG00000007234">
    <property type="expression patterns" value="Expressed in duodenum and 21 other cell types or tissues"/>
</dbReference>
<dbReference type="GO" id="GO:0001669">
    <property type="term" value="C:acrosomal vesicle"/>
    <property type="evidence" value="ECO:0000314"/>
    <property type="project" value="RGD"/>
</dbReference>
<dbReference type="GO" id="GO:0005789">
    <property type="term" value="C:endoplasmic reticulum membrane"/>
    <property type="evidence" value="ECO:0007669"/>
    <property type="project" value="UniProtKB-SubCell"/>
</dbReference>
<dbReference type="GO" id="GO:0020037">
    <property type="term" value="F:heme binding"/>
    <property type="evidence" value="ECO:0000266"/>
    <property type="project" value="RGD"/>
</dbReference>
<dbReference type="GO" id="GO:0005506">
    <property type="term" value="F:iron ion binding"/>
    <property type="evidence" value="ECO:0007669"/>
    <property type="project" value="InterPro"/>
</dbReference>
<dbReference type="GO" id="GO:0016491">
    <property type="term" value="F:oxidoreductase activity"/>
    <property type="evidence" value="ECO:0000318"/>
    <property type="project" value="GO_Central"/>
</dbReference>
<dbReference type="GO" id="GO:0008398">
    <property type="term" value="F:sterol 14-demethylase activity"/>
    <property type="evidence" value="ECO:0000314"/>
    <property type="project" value="RGD"/>
</dbReference>
<dbReference type="GO" id="GO:0033488">
    <property type="term" value="P:cholesterol biosynthetic process via 24,25-dihydrolanosterol"/>
    <property type="evidence" value="ECO:0000314"/>
    <property type="project" value="RGD"/>
</dbReference>
<dbReference type="GO" id="GO:1900222">
    <property type="term" value="P:negative regulation of amyloid-beta clearance"/>
    <property type="evidence" value="ECO:0000266"/>
    <property type="project" value="RGD"/>
</dbReference>
<dbReference type="GO" id="GO:0042177">
    <property type="term" value="P:negative regulation of protein catabolic process"/>
    <property type="evidence" value="ECO:0000266"/>
    <property type="project" value="RGD"/>
</dbReference>
<dbReference type="GO" id="GO:0050709">
    <property type="term" value="P:negative regulation of protein secretion"/>
    <property type="evidence" value="ECO:0000266"/>
    <property type="project" value="RGD"/>
</dbReference>
<dbReference type="GO" id="GO:0060282">
    <property type="term" value="P:positive regulation of oocyte development"/>
    <property type="evidence" value="ECO:0000315"/>
    <property type="project" value="RGD"/>
</dbReference>
<dbReference type="GO" id="GO:0045540">
    <property type="term" value="P:regulation of cholesterol biosynthetic process"/>
    <property type="evidence" value="ECO:0000304"/>
    <property type="project" value="RGD"/>
</dbReference>
<dbReference type="GO" id="GO:0044752">
    <property type="term" value="P:response to human chorionic gonadotropin"/>
    <property type="evidence" value="ECO:0000270"/>
    <property type="project" value="RGD"/>
</dbReference>
<dbReference type="GO" id="GO:0032868">
    <property type="term" value="P:response to insulin"/>
    <property type="evidence" value="ECO:0000270"/>
    <property type="project" value="RGD"/>
</dbReference>
<dbReference type="GO" id="GO:0010288">
    <property type="term" value="P:response to lead ion"/>
    <property type="evidence" value="ECO:0000270"/>
    <property type="project" value="RGD"/>
</dbReference>
<dbReference type="GO" id="GO:0007283">
    <property type="term" value="P:spermatogenesis"/>
    <property type="evidence" value="ECO:0000270"/>
    <property type="project" value="RGD"/>
</dbReference>
<dbReference type="GO" id="GO:0006694">
    <property type="term" value="P:steroid biosynthetic process"/>
    <property type="evidence" value="ECO:0000266"/>
    <property type="project" value="RGD"/>
</dbReference>
<dbReference type="CDD" id="cd11042">
    <property type="entry name" value="CYP51-like"/>
    <property type="match status" value="1"/>
</dbReference>
<dbReference type="FunFam" id="1.10.630.10:FF:000027">
    <property type="entry name" value="lanosterol 14-alpha demethylase isoform X1"/>
    <property type="match status" value="1"/>
</dbReference>
<dbReference type="Gene3D" id="1.10.630.10">
    <property type="entry name" value="Cytochrome P450"/>
    <property type="match status" value="1"/>
</dbReference>
<dbReference type="InterPro" id="IPR050529">
    <property type="entry name" value="CYP450_sterol_14alpha_dmase"/>
</dbReference>
<dbReference type="InterPro" id="IPR001128">
    <property type="entry name" value="Cyt_P450"/>
</dbReference>
<dbReference type="InterPro" id="IPR017972">
    <property type="entry name" value="Cyt_P450_CS"/>
</dbReference>
<dbReference type="InterPro" id="IPR002403">
    <property type="entry name" value="Cyt_P450_E_grp-IV"/>
</dbReference>
<dbReference type="InterPro" id="IPR036396">
    <property type="entry name" value="Cyt_P450_sf"/>
</dbReference>
<dbReference type="PANTHER" id="PTHR24304:SF2">
    <property type="entry name" value="24-HYDROXYCHOLESTEROL 7-ALPHA-HYDROXYLASE"/>
    <property type="match status" value="1"/>
</dbReference>
<dbReference type="PANTHER" id="PTHR24304">
    <property type="entry name" value="CYTOCHROME P450 FAMILY 7"/>
    <property type="match status" value="1"/>
</dbReference>
<dbReference type="Pfam" id="PF00067">
    <property type="entry name" value="p450"/>
    <property type="match status" value="1"/>
</dbReference>
<dbReference type="PRINTS" id="PR00465">
    <property type="entry name" value="EP450IV"/>
</dbReference>
<dbReference type="PRINTS" id="PR00385">
    <property type="entry name" value="P450"/>
</dbReference>
<dbReference type="SUPFAM" id="SSF48264">
    <property type="entry name" value="Cytochrome P450"/>
    <property type="match status" value="1"/>
</dbReference>
<dbReference type="PROSITE" id="PS00086">
    <property type="entry name" value="CYTOCHROME_P450"/>
    <property type="match status" value="1"/>
</dbReference>
<proteinExistence type="evidence at protein level"/>
<gene>
    <name evidence="10 20" type="primary">Cyp51a1</name>
    <name type="synonym">Cyp51</name>
</gene>
<protein>
    <recommendedName>
        <fullName evidence="11 13">Lanosterol 14-alpha demethylase</fullName>
        <shortName evidence="12">LDM</shortName>
        <ecNumber evidence="3 4 5 6 7">1.14.14.154</ecNumber>
    </recommendedName>
    <alternativeName>
        <fullName>CYPLI</fullName>
    </alternativeName>
    <alternativeName>
        <fullName>Cytochrome P450 51A1</fullName>
        <shortName evidence="9 10">CYP51</shortName>
    </alternativeName>
    <alternativeName>
        <fullName evidence="11">Cytochrome P450-14DM</fullName>
        <shortName>Cytochrome P45014DM</shortName>
    </alternativeName>
    <alternativeName>
        <fullName>Cytochrome P450LI</fullName>
    </alternativeName>
    <alternativeName>
        <fullName evidence="9 10">Sterol 14-alpha demethylase P450</fullName>
    </alternativeName>
</protein>
<keyword id="KW-0152">Cholesterol biosynthesis</keyword>
<keyword id="KW-0153">Cholesterol metabolism</keyword>
<keyword id="KW-0903">Direct protein sequencing</keyword>
<keyword id="KW-0256">Endoplasmic reticulum</keyword>
<keyword id="KW-0349">Heme</keyword>
<keyword id="KW-0408">Iron</keyword>
<keyword id="KW-0444">Lipid biosynthesis</keyword>
<keyword id="KW-0443">Lipid metabolism</keyword>
<keyword id="KW-0472">Membrane</keyword>
<keyword id="KW-0479">Metal-binding</keyword>
<keyword id="KW-0492">Microsome</keyword>
<keyword id="KW-0503">Monooxygenase</keyword>
<keyword id="KW-0560">Oxidoreductase</keyword>
<keyword id="KW-1185">Reference proteome</keyword>
<keyword id="KW-0752">Steroid biosynthesis</keyword>
<keyword id="KW-0753">Steroid metabolism</keyword>
<keyword id="KW-0756">Sterol biosynthesis</keyword>
<keyword id="KW-1207">Sterol metabolism</keyword>
<keyword id="KW-0812">Transmembrane</keyword>
<keyword id="KW-1133">Transmembrane helix</keyword>
<keyword id="KW-0832">Ubl conjugation</keyword>
<accession>Q64654</accession>
<accession>Q64549</accession>
<evidence type="ECO:0000250" key="1">
    <source>
        <dbReference type="UniProtKB" id="Q16850"/>
    </source>
</evidence>
<evidence type="ECO:0000255" key="2"/>
<evidence type="ECO:0000269" key="3">
    <source>
    </source>
</evidence>
<evidence type="ECO:0000269" key="4">
    <source>
    </source>
</evidence>
<evidence type="ECO:0000269" key="5">
    <source>
    </source>
</evidence>
<evidence type="ECO:0000269" key="6">
    <source>
    </source>
</evidence>
<evidence type="ECO:0000269" key="7">
    <source>
    </source>
</evidence>
<evidence type="ECO:0000269" key="8">
    <source>
    </source>
</evidence>
<evidence type="ECO:0000303" key="9">
    <source>
    </source>
</evidence>
<evidence type="ECO:0000303" key="10">
    <source>
    </source>
</evidence>
<evidence type="ECO:0000303" key="11">
    <source>
    </source>
</evidence>
<evidence type="ECO:0000303" key="12">
    <source>
    </source>
</evidence>
<evidence type="ECO:0000303" key="13">
    <source>
    </source>
</evidence>
<evidence type="ECO:0000305" key="14"/>
<evidence type="ECO:0000305" key="15">
    <source>
    </source>
</evidence>
<evidence type="ECO:0000305" key="16">
    <source>
    </source>
</evidence>
<evidence type="ECO:0000305" key="17">
    <source>
    </source>
</evidence>
<evidence type="ECO:0000305" key="18">
    <source>
    </source>
</evidence>
<evidence type="ECO:0000305" key="19">
    <source>
    </source>
</evidence>
<evidence type="ECO:0000312" key="20">
    <source>
        <dbReference type="RGD" id="2481"/>
    </source>
</evidence>
<sequence>MVLLGLLQSGGSVLGQAMEQVTGGNLLSTLLIACAFTLSLVYLFRLAVGHMVQLPAGAKSPPYIYSPIPFLGHAIAFGKSPIEFLENAYEKYGPVFSFTMVGKTFTYLLGSDAAALLFNSKNEDLNAEEVYGRLTTPVFGKGVAYDVPNAVFLEQKKILKSGLNIAHFKQYVSIIEKEAKEYFKSWGESGERNVFEALSELIILTASHCLHGKEIRSQLNEKVAQLYADLDGGFSHAAWLLPGWLPLPSFRRRDRAHREIKNIFYKAIQKRRLSKEPAEDILQTLLDSTYKDGRPLTDDEIAGMLIGLLLAGQHTSSTTSAWMGFFLARDKPLQDKCYLEQKTVCGEDLPPLTYEQLKDLNLLDRCIKETLRLRPPIMTMMRMAKTPQTVAGYTIPPGHQVCVSPTVNQRLKDSWVERLDFNPDRYLQDNPASGEKFAYVPFGAGRHRCIGENFAYVQIKTIWSTMLRLYEFDLINGYFPSVNYTTMIHTPENPVIRYKRRSK</sequence>
<name>CP51A_RAT</name>